<keyword id="KW-0966">Cell projection</keyword>
<keyword id="KW-0963">Cytoplasm</keyword>
<keyword id="KW-0496">Mitochondrion</keyword>
<keyword id="KW-0524">Neurogenesis</keyword>
<keyword id="KW-0597">Phosphoprotein</keyword>
<keyword id="KW-1185">Reference proteome</keyword>
<keyword id="KW-0770">Synapse</keyword>
<keyword id="KW-0813">Transport</keyword>
<keyword id="KW-0832">Ubl conjugation</keyword>
<reference key="1">
    <citation type="journal article" date="2003" name="Nat. Genet.">
        <title>Mutations in a novel gene encoding a CRAL-TRIO domain cause human Cayman ataxia and ataxia/dystonia in the jittery mouse.</title>
        <authorList>
            <person name="Bomar J.M."/>
            <person name="Benke P.J."/>
            <person name="Slattery E.L."/>
            <person name="Puttagunta R."/>
            <person name="Taylor L.P."/>
            <person name="Seong E."/>
            <person name="Nystuen A."/>
            <person name="Chen W."/>
            <person name="Albin R.L."/>
            <person name="Patel P.D."/>
            <person name="Kittles R.A."/>
            <person name="Sheffield V.C."/>
            <person name="Burmeister M."/>
        </authorList>
    </citation>
    <scope>NUCLEOTIDE SEQUENCE [MRNA]</scope>
    <scope>DISEASE</scope>
    <scope>TISSUE SPECIFICITY</scope>
    <scope>DEVELOPMENTAL STAGE</scope>
</reference>
<reference key="2">
    <citation type="journal article" date="2005" name="Science">
        <title>The transcriptional landscape of the mammalian genome.</title>
        <authorList>
            <person name="Carninci P."/>
            <person name="Kasukawa T."/>
            <person name="Katayama S."/>
            <person name="Gough J."/>
            <person name="Frith M.C."/>
            <person name="Maeda N."/>
            <person name="Oyama R."/>
            <person name="Ravasi T."/>
            <person name="Lenhard B."/>
            <person name="Wells C."/>
            <person name="Kodzius R."/>
            <person name="Shimokawa K."/>
            <person name="Bajic V.B."/>
            <person name="Brenner S.E."/>
            <person name="Batalov S."/>
            <person name="Forrest A.R."/>
            <person name="Zavolan M."/>
            <person name="Davis M.J."/>
            <person name="Wilming L.G."/>
            <person name="Aidinis V."/>
            <person name="Allen J.E."/>
            <person name="Ambesi-Impiombato A."/>
            <person name="Apweiler R."/>
            <person name="Aturaliya R.N."/>
            <person name="Bailey T.L."/>
            <person name="Bansal M."/>
            <person name="Baxter L."/>
            <person name="Beisel K.W."/>
            <person name="Bersano T."/>
            <person name="Bono H."/>
            <person name="Chalk A.M."/>
            <person name="Chiu K.P."/>
            <person name="Choudhary V."/>
            <person name="Christoffels A."/>
            <person name="Clutterbuck D.R."/>
            <person name="Crowe M.L."/>
            <person name="Dalla E."/>
            <person name="Dalrymple B.P."/>
            <person name="de Bono B."/>
            <person name="Della Gatta G."/>
            <person name="di Bernardo D."/>
            <person name="Down T."/>
            <person name="Engstrom P."/>
            <person name="Fagiolini M."/>
            <person name="Faulkner G."/>
            <person name="Fletcher C.F."/>
            <person name="Fukushima T."/>
            <person name="Furuno M."/>
            <person name="Futaki S."/>
            <person name="Gariboldi M."/>
            <person name="Georgii-Hemming P."/>
            <person name="Gingeras T.R."/>
            <person name="Gojobori T."/>
            <person name="Green R.E."/>
            <person name="Gustincich S."/>
            <person name="Harbers M."/>
            <person name="Hayashi Y."/>
            <person name="Hensch T.K."/>
            <person name="Hirokawa N."/>
            <person name="Hill D."/>
            <person name="Huminiecki L."/>
            <person name="Iacono M."/>
            <person name="Ikeo K."/>
            <person name="Iwama A."/>
            <person name="Ishikawa T."/>
            <person name="Jakt M."/>
            <person name="Kanapin A."/>
            <person name="Katoh M."/>
            <person name="Kawasawa Y."/>
            <person name="Kelso J."/>
            <person name="Kitamura H."/>
            <person name="Kitano H."/>
            <person name="Kollias G."/>
            <person name="Krishnan S.P."/>
            <person name="Kruger A."/>
            <person name="Kummerfeld S.K."/>
            <person name="Kurochkin I.V."/>
            <person name="Lareau L.F."/>
            <person name="Lazarevic D."/>
            <person name="Lipovich L."/>
            <person name="Liu J."/>
            <person name="Liuni S."/>
            <person name="McWilliam S."/>
            <person name="Madan Babu M."/>
            <person name="Madera M."/>
            <person name="Marchionni L."/>
            <person name="Matsuda H."/>
            <person name="Matsuzawa S."/>
            <person name="Miki H."/>
            <person name="Mignone F."/>
            <person name="Miyake S."/>
            <person name="Morris K."/>
            <person name="Mottagui-Tabar S."/>
            <person name="Mulder N."/>
            <person name="Nakano N."/>
            <person name="Nakauchi H."/>
            <person name="Ng P."/>
            <person name="Nilsson R."/>
            <person name="Nishiguchi S."/>
            <person name="Nishikawa S."/>
            <person name="Nori F."/>
            <person name="Ohara O."/>
            <person name="Okazaki Y."/>
            <person name="Orlando V."/>
            <person name="Pang K.C."/>
            <person name="Pavan W.J."/>
            <person name="Pavesi G."/>
            <person name="Pesole G."/>
            <person name="Petrovsky N."/>
            <person name="Piazza S."/>
            <person name="Reed J."/>
            <person name="Reid J.F."/>
            <person name="Ring B.Z."/>
            <person name="Ringwald M."/>
            <person name="Rost B."/>
            <person name="Ruan Y."/>
            <person name="Salzberg S.L."/>
            <person name="Sandelin A."/>
            <person name="Schneider C."/>
            <person name="Schoenbach C."/>
            <person name="Sekiguchi K."/>
            <person name="Semple C.A."/>
            <person name="Seno S."/>
            <person name="Sessa L."/>
            <person name="Sheng Y."/>
            <person name="Shibata Y."/>
            <person name="Shimada H."/>
            <person name="Shimada K."/>
            <person name="Silva D."/>
            <person name="Sinclair B."/>
            <person name="Sperling S."/>
            <person name="Stupka E."/>
            <person name="Sugiura K."/>
            <person name="Sultana R."/>
            <person name="Takenaka Y."/>
            <person name="Taki K."/>
            <person name="Tammoja K."/>
            <person name="Tan S.L."/>
            <person name="Tang S."/>
            <person name="Taylor M.S."/>
            <person name="Tegner J."/>
            <person name="Teichmann S.A."/>
            <person name="Ueda H.R."/>
            <person name="van Nimwegen E."/>
            <person name="Verardo R."/>
            <person name="Wei C.L."/>
            <person name="Yagi K."/>
            <person name="Yamanishi H."/>
            <person name="Zabarovsky E."/>
            <person name="Zhu S."/>
            <person name="Zimmer A."/>
            <person name="Hide W."/>
            <person name="Bult C."/>
            <person name="Grimmond S.M."/>
            <person name="Teasdale R.D."/>
            <person name="Liu E.T."/>
            <person name="Brusic V."/>
            <person name="Quackenbush J."/>
            <person name="Wahlestedt C."/>
            <person name="Mattick J.S."/>
            <person name="Hume D.A."/>
            <person name="Kai C."/>
            <person name="Sasaki D."/>
            <person name="Tomaru Y."/>
            <person name="Fukuda S."/>
            <person name="Kanamori-Katayama M."/>
            <person name="Suzuki M."/>
            <person name="Aoki J."/>
            <person name="Arakawa T."/>
            <person name="Iida J."/>
            <person name="Imamura K."/>
            <person name="Itoh M."/>
            <person name="Kato T."/>
            <person name="Kawaji H."/>
            <person name="Kawagashira N."/>
            <person name="Kawashima T."/>
            <person name="Kojima M."/>
            <person name="Kondo S."/>
            <person name="Konno H."/>
            <person name="Nakano K."/>
            <person name="Ninomiya N."/>
            <person name="Nishio T."/>
            <person name="Okada M."/>
            <person name="Plessy C."/>
            <person name="Shibata K."/>
            <person name="Shiraki T."/>
            <person name="Suzuki S."/>
            <person name="Tagami M."/>
            <person name="Waki K."/>
            <person name="Watahiki A."/>
            <person name="Okamura-Oho Y."/>
            <person name="Suzuki H."/>
            <person name="Kawai J."/>
            <person name="Hayashizaki Y."/>
        </authorList>
    </citation>
    <scope>NUCLEOTIDE SEQUENCE [LARGE SCALE MRNA]</scope>
    <source>
        <strain>C57BL/6J</strain>
        <tissue>Head</tissue>
        <tissue>Hypothalamus</tissue>
        <tissue>Spinal cord</tissue>
    </source>
</reference>
<reference key="3">
    <citation type="journal article" date="2004" name="Genome Res.">
        <title>The status, quality, and expansion of the NIH full-length cDNA project: the Mammalian Gene Collection (MGC).</title>
        <authorList>
            <consortium name="The MGC Project Team"/>
        </authorList>
    </citation>
    <scope>NUCLEOTIDE SEQUENCE [LARGE SCALE MRNA]</scope>
    <source>
        <tissue>Eye</tissue>
    </source>
</reference>
<reference key="4">
    <citation type="journal article" date="2006" name="J. Cell Sci.">
        <title>Brain-specific BNIP-2-homology protein Caytaxin relocalises glutaminase to neurite terminals and reduces glutamate levels.</title>
        <authorList>
            <person name="Buschdorf J.P."/>
            <person name="Li Chew L."/>
            <person name="Zhang B."/>
            <person name="Cao Q."/>
            <person name="Liang F.Y."/>
            <person name="Liou Y.C."/>
            <person name="Zhou Y.T."/>
            <person name="Low B.C."/>
        </authorList>
    </citation>
    <scope>INTERACTION WITH GLS</scope>
    <scope>TISSUE SPECIFICITY</scope>
</reference>
<reference key="5">
    <citation type="journal article" date="2007" name="Brain Res.">
        <title>Expression and localization of Cayman ataxia-related protein, Caytaxin, is regulated in a developmental- and spatial-dependent manner.</title>
        <authorList>
            <person name="Hayakawa Y."/>
            <person name="Itoh M."/>
            <person name="Yamada A."/>
            <person name="Mitsuda T."/>
            <person name="Nakagawa T."/>
        </authorList>
    </citation>
    <scope>DEVELOPMENTAL STAGE</scope>
    <scope>TISSUE SPECIFICITY</scope>
    <scope>SUBCELLULAR LOCATION</scope>
</reference>
<reference key="6">
    <citation type="journal article" date="2009" name="J. Cell Sci.">
        <title>Cayman ataxia protein caytaxin is transported by kinesin along neurites through binding to kinesin light chains.</title>
        <authorList>
            <person name="Aoyama T."/>
            <person name="Hata S."/>
            <person name="Nakao T."/>
            <person name="Tanigawa Y."/>
            <person name="Oka C."/>
            <person name="Kawaichi M."/>
        </authorList>
    </citation>
    <scope>FUNCTION IN MITOCHONDRIA LOCALIZATION</scope>
    <scope>INTERACTION WITH KLC1</scope>
    <scope>MUTAGENESIS OF 115-GLU--GLU-117 AND 118-TRP--ASP-120</scope>
</reference>
<reference key="7">
    <citation type="journal article" date="2010" name="Cell">
        <title>A tissue-specific atlas of mouse protein phosphorylation and expression.</title>
        <authorList>
            <person name="Huttlin E.L."/>
            <person name="Jedrychowski M.P."/>
            <person name="Elias J.E."/>
            <person name="Goswami T."/>
            <person name="Rad R."/>
            <person name="Beausoleil S.A."/>
            <person name="Villen J."/>
            <person name="Haas W."/>
            <person name="Sowa M.E."/>
            <person name="Gygi S.P."/>
        </authorList>
    </citation>
    <scope>PHOSPHORYLATION [LARGE SCALE ANALYSIS] AT SER-54</scope>
    <scope>IDENTIFICATION BY MASS SPECTROMETRY [LARGE SCALE ANALYSIS]</scope>
    <source>
        <tissue>Brain</tissue>
    </source>
</reference>
<reference key="8">
    <citation type="journal article" date="2011" name="Neurochem. Res.">
        <title>Cayman ataxia-related protein is a presynapse-specific caspase-3 substrate.</title>
        <authorList>
            <person name="Itoh M."/>
            <person name="Li S."/>
            <person name="Ohta K."/>
            <person name="Yamada A."/>
            <person name="Hayakawa-Yano Y."/>
            <person name="Ueda M."/>
            <person name="Hida Y."/>
            <person name="Suzuki Y."/>
            <person name="Ohta E."/>
            <person name="Mizuno A."/>
            <person name="Banno Y."/>
            <person name="Nakagawa T."/>
        </authorList>
    </citation>
    <scope>PROTEOLYTIC PROCESSING BY CASP3</scope>
</reference>
<evidence type="ECO:0000250" key="1"/>
<evidence type="ECO:0000250" key="2">
    <source>
        <dbReference type="UniProtKB" id="Q1M168"/>
    </source>
</evidence>
<evidence type="ECO:0000250" key="3">
    <source>
        <dbReference type="UniProtKB" id="Q86WG3"/>
    </source>
</evidence>
<evidence type="ECO:0000255" key="4">
    <source>
        <dbReference type="PROSITE-ProRule" id="PRU00056"/>
    </source>
</evidence>
<evidence type="ECO:0000256" key="5">
    <source>
        <dbReference type="SAM" id="MobiDB-lite"/>
    </source>
</evidence>
<evidence type="ECO:0000269" key="6">
    <source>
    </source>
</evidence>
<evidence type="ECO:0000269" key="7">
    <source>
    </source>
</evidence>
<evidence type="ECO:0000269" key="8">
    <source>
    </source>
</evidence>
<evidence type="ECO:0000269" key="9">
    <source>
    </source>
</evidence>
<evidence type="ECO:0000269" key="10">
    <source>
    </source>
</evidence>
<evidence type="ECO:0007744" key="11">
    <source>
    </source>
</evidence>
<gene>
    <name type="primary">Atcay</name>
</gene>
<protein>
    <recommendedName>
        <fullName>Caytaxin</fullName>
    </recommendedName>
</protein>
<accession>Q8BHE3</accession>
<accession>Q3TR94</accession>
<organism>
    <name type="scientific">Mus musculus</name>
    <name type="common">Mouse</name>
    <dbReference type="NCBI Taxonomy" id="10090"/>
    <lineage>
        <taxon>Eukaryota</taxon>
        <taxon>Metazoa</taxon>
        <taxon>Chordata</taxon>
        <taxon>Craniata</taxon>
        <taxon>Vertebrata</taxon>
        <taxon>Euteleostomi</taxon>
        <taxon>Mammalia</taxon>
        <taxon>Eutheria</taxon>
        <taxon>Euarchontoglires</taxon>
        <taxon>Glires</taxon>
        <taxon>Rodentia</taxon>
        <taxon>Myomorpha</taxon>
        <taxon>Muroidea</taxon>
        <taxon>Muridae</taxon>
        <taxon>Murinae</taxon>
        <taxon>Mus</taxon>
        <taxon>Mus</taxon>
    </lineage>
</organism>
<name>ATCAY_MOUSE</name>
<feature type="chain" id="PRO_0000210769" description="Caytaxin">
    <location>
        <begin position="1"/>
        <end position="372"/>
    </location>
</feature>
<feature type="domain" description="CRAL-TRIO" evidence="4">
    <location>
        <begin position="171"/>
        <end position="328"/>
    </location>
</feature>
<feature type="region of interest" description="Disordered" evidence="5">
    <location>
        <begin position="1"/>
        <end position="58"/>
    </location>
</feature>
<feature type="region of interest" description="Required for interaction with KLC1" evidence="9">
    <location>
        <begin position="115"/>
        <end position="120"/>
    </location>
</feature>
<feature type="region of interest" description="Mediates interaction with GLS" evidence="1">
    <location>
        <begin position="190"/>
        <end position="372"/>
    </location>
</feature>
<feature type="region of interest" description="Disordered" evidence="5">
    <location>
        <begin position="329"/>
        <end position="372"/>
    </location>
</feature>
<feature type="compositionally biased region" description="Basic and acidic residues" evidence="5">
    <location>
        <begin position="11"/>
        <end position="29"/>
    </location>
</feature>
<feature type="compositionally biased region" description="Polar residues" evidence="5">
    <location>
        <begin position="43"/>
        <end position="53"/>
    </location>
</feature>
<feature type="compositionally biased region" description="Acidic residues" evidence="5">
    <location>
        <begin position="354"/>
        <end position="372"/>
    </location>
</feature>
<feature type="site" description="Cleavage; by CASP3" evidence="1">
    <location>
        <begin position="105"/>
        <end position="106"/>
    </location>
</feature>
<feature type="modified residue" description="Phosphoserine" evidence="11">
    <location>
        <position position="54"/>
    </location>
</feature>
<comment type="function">
    <text evidence="9">Functions in the development of neural tissues, particularly the postnatal maturation of the cerebellar cortex. May play a role in neurotransmission through regulation of glutaminase/GLS, an enzyme responsible for the production in neurons of the glutamate neurotransmitter. Alternatively, may regulate the localization of mitochondria within axons and dendrites.</text>
</comment>
<comment type="subunit">
    <text evidence="1">Interacts with KLC1; may link mitochondria to KLC1 and regulate mitochondria localization into neuron projections. Interacts with GLS; the interaction is direct and may control GLS localization, negatively regulating its activity. Interacts with PIN1 (via WW domain); upon NGF stimulation (By similarity). The interaction with PIN1 and GLS is competitive (By similarity).</text>
</comment>
<comment type="subcellular location">
    <subcellularLocation>
        <location evidence="2">Cell projection</location>
        <location evidence="2">Axon</location>
    </subcellularLocation>
    <subcellularLocation>
        <location evidence="2">Cell projection</location>
        <location evidence="2">Dendrite</location>
    </subcellularLocation>
    <subcellularLocation>
        <location evidence="8">Presynapse</location>
    </subcellularLocation>
    <subcellularLocation>
        <location evidence="2">Mitochondrion</location>
    </subcellularLocation>
    <subcellularLocation>
        <location evidence="2">Cell projection</location>
        <location evidence="2">Growth cone</location>
    </subcellularLocation>
    <subcellularLocation>
        <location evidence="3">Cytoplasm</location>
    </subcellularLocation>
</comment>
<comment type="tissue specificity">
    <text evidence="6 7 8">Neuronal tissues specific. Strongly expressed in brain. Expressed in virtually all parts of the adult brain, including cortex, cerebellum and olfactory bulbs. Enriched in hippocampus, cerebellar cortex, deep cerebellar nuclei, and pontine nuclei (at protein level).</text>
</comment>
<comment type="developmental stage">
    <text evidence="6 8">Expressed in embryo, where it is also completely restricted to neuronal tissues, including brain, dorsal root ganglia and enteric nervous system. MRNA and protein expressions are not correlated during development.</text>
</comment>
<comment type="domain">
    <text evidence="1">The CRAL-TRIO domain is known to bind small hydrophobic molecules.</text>
</comment>
<comment type="PTM">
    <text evidence="10">Cleaved by CASP3 and CASP7. The potential C-terminal product released by CASP3 cleavage may inhibit the ERK signaling pathway through MAP2K2.</text>
</comment>
<comment type="PTM">
    <text evidence="1">May be ubiquitinated by STUB1.</text>
</comment>
<comment type="disease">
    <text evidence="6">Defects in Atcay are the cause of jittery phenotype, which is characterized by severe truncal and limb ataxia and death due to starvation and dehydration by 3-4 weeks of age.</text>
</comment>
<dbReference type="EMBL" id="AY349150">
    <property type="protein sequence ID" value="AAQ90064.1"/>
    <property type="molecule type" value="mRNA"/>
</dbReference>
<dbReference type="EMBL" id="AK028298">
    <property type="protein sequence ID" value="BAC25867.1"/>
    <property type="molecule type" value="mRNA"/>
</dbReference>
<dbReference type="EMBL" id="AK038483">
    <property type="protein sequence ID" value="BAC30014.1"/>
    <property type="molecule type" value="mRNA"/>
</dbReference>
<dbReference type="EMBL" id="AK038990">
    <property type="protein sequence ID" value="BAC30195.1"/>
    <property type="molecule type" value="mRNA"/>
</dbReference>
<dbReference type="EMBL" id="AK039411">
    <property type="protein sequence ID" value="BAC30342.1"/>
    <property type="molecule type" value="mRNA"/>
</dbReference>
<dbReference type="EMBL" id="AK162959">
    <property type="protein sequence ID" value="BAE37136.1"/>
    <property type="molecule type" value="mRNA"/>
</dbReference>
<dbReference type="EMBL" id="BC048903">
    <property type="protein sequence ID" value="AAH48903.1"/>
    <property type="molecule type" value="mRNA"/>
</dbReference>
<dbReference type="CCDS" id="CCDS24047.1"/>
<dbReference type="RefSeq" id="NP_848777.1">
    <property type="nucleotide sequence ID" value="NM_178662.5"/>
</dbReference>
<dbReference type="BioGRID" id="200865">
    <property type="interactions" value="2"/>
</dbReference>
<dbReference type="ELM" id="Q8BHE3"/>
<dbReference type="FunCoup" id="Q8BHE3">
    <property type="interactions" value="423"/>
</dbReference>
<dbReference type="STRING" id="10090.ENSMUSP00000036721"/>
<dbReference type="GlyGen" id="Q8BHE3">
    <property type="glycosylation" value="1 site, 1 N-linked glycan (1 site)"/>
</dbReference>
<dbReference type="iPTMnet" id="Q8BHE3"/>
<dbReference type="PhosphoSitePlus" id="Q8BHE3"/>
<dbReference type="SwissPalm" id="Q8BHE3"/>
<dbReference type="PaxDb" id="10090-ENSMUSP00000036721"/>
<dbReference type="PeptideAtlas" id="Q8BHE3"/>
<dbReference type="ProteomicsDB" id="265173"/>
<dbReference type="Antibodypedia" id="23397">
    <property type="antibodies" value="68 antibodies from 19 providers"/>
</dbReference>
<dbReference type="DNASU" id="16467"/>
<dbReference type="Ensembl" id="ENSMUST00000047408.6">
    <property type="protein sequence ID" value="ENSMUSP00000036721.5"/>
    <property type="gene ID" value="ENSMUSG00000034958.12"/>
</dbReference>
<dbReference type="GeneID" id="16467"/>
<dbReference type="KEGG" id="mmu:16467"/>
<dbReference type="UCSC" id="uc007ggo.1">
    <property type="organism name" value="mouse"/>
</dbReference>
<dbReference type="AGR" id="MGI:2448730"/>
<dbReference type="CTD" id="85300"/>
<dbReference type="MGI" id="MGI:2448730">
    <property type="gene designation" value="Atcay"/>
</dbReference>
<dbReference type="VEuPathDB" id="HostDB:ENSMUSG00000034958"/>
<dbReference type="eggNOG" id="KOG3308">
    <property type="taxonomic scope" value="Eukaryota"/>
</dbReference>
<dbReference type="GeneTree" id="ENSGT00940000158364"/>
<dbReference type="HOGENOM" id="CLU_039135_0_0_1"/>
<dbReference type="InParanoid" id="Q8BHE3"/>
<dbReference type="OMA" id="QIPDCIQ"/>
<dbReference type="OrthoDB" id="19923at2759"/>
<dbReference type="PhylomeDB" id="Q8BHE3"/>
<dbReference type="TreeFam" id="TF324164"/>
<dbReference type="BioGRID-ORCS" id="16467">
    <property type="hits" value="4 hits in 77 CRISPR screens"/>
</dbReference>
<dbReference type="ChiTaRS" id="Atcay">
    <property type="organism name" value="mouse"/>
</dbReference>
<dbReference type="PRO" id="PR:Q8BHE3"/>
<dbReference type="Proteomes" id="UP000000589">
    <property type="component" value="Chromosome 10"/>
</dbReference>
<dbReference type="RNAct" id="Q8BHE3">
    <property type="molecule type" value="protein"/>
</dbReference>
<dbReference type="Bgee" id="ENSMUSG00000034958">
    <property type="expression patterns" value="Expressed in cortical plate and 126 other cell types or tissues"/>
</dbReference>
<dbReference type="ExpressionAtlas" id="Q8BHE3">
    <property type="expression patterns" value="baseline and differential"/>
</dbReference>
<dbReference type="GO" id="GO:0030424">
    <property type="term" value="C:axon"/>
    <property type="evidence" value="ECO:0000250"/>
    <property type="project" value="UniProtKB"/>
</dbReference>
<dbReference type="GO" id="GO:0005737">
    <property type="term" value="C:cytoplasm"/>
    <property type="evidence" value="ECO:0000250"/>
    <property type="project" value="UniProtKB"/>
</dbReference>
<dbReference type="GO" id="GO:0030425">
    <property type="term" value="C:dendrite"/>
    <property type="evidence" value="ECO:0000250"/>
    <property type="project" value="UniProtKB"/>
</dbReference>
<dbReference type="GO" id="GO:0030426">
    <property type="term" value="C:growth cone"/>
    <property type="evidence" value="ECO:0007669"/>
    <property type="project" value="UniProtKB-SubCell"/>
</dbReference>
<dbReference type="GO" id="GO:0031966">
    <property type="term" value="C:mitochondrial membrane"/>
    <property type="evidence" value="ECO:0000314"/>
    <property type="project" value="UniProtKB"/>
</dbReference>
<dbReference type="GO" id="GO:0043005">
    <property type="term" value="C:neuron projection"/>
    <property type="evidence" value="ECO:0000314"/>
    <property type="project" value="UniProtKB"/>
</dbReference>
<dbReference type="GO" id="GO:0044306">
    <property type="term" value="C:neuron projection terminus"/>
    <property type="evidence" value="ECO:0007669"/>
    <property type="project" value="Ensembl"/>
</dbReference>
<dbReference type="GO" id="GO:0048471">
    <property type="term" value="C:perinuclear region of cytoplasm"/>
    <property type="evidence" value="ECO:0007669"/>
    <property type="project" value="Ensembl"/>
</dbReference>
<dbReference type="GO" id="GO:0098793">
    <property type="term" value="C:presynapse"/>
    <property type="evidence" value="ECO:0007669"/>
    <property type="project" value="UniProtKB-SubCell"/>
</dbReference>
<dbReference type="GO" id="GO:0045202">
    <property type="term" value="C:synapse"/>
    <property type="evidence" value="ECO:0000250"/>
    <property type="project" value="UniProtKB"/>
</dbReference>
<dbReference type="GO" id="GO:0019894">
    <property type="term" value="F:kinesin binding"/>
    <property type="evidence" value="ECO:0007669"/>
    <property type="project" value="Ensembl"/>
</dbReference>
<dbReference type="GO" id="GO:0048311">
    <property type="term" value="P:mitochondrion distribution"/>
    <property type="evidence" value="ECO:0000250"/>
    <property type="project" value="UniProtKB"/>
</dbReference>
<dbReference type="GO" id="GO:2000212">
    <property type="term" value="P:negative regulation of glutamate metabolic process"/>
    <property type="evidence" value="ECO:0000250"/>
    <property type="project" value="UniProtKB"/>
</dbReference>
<dbReference type="GO" id="GO:0031175">
    <property type="term" value="P:neuron projection development"/>
    <property type="evidence" value="ECO:0000314"/>
    <property type="project" value="UniProtKB"/>
</dbReference>
<dbReference type="GO" id="GO:0032880">
    <property type="term" value="P:regulation of protein localization"/>
    <property type="evidence" value="ECO:0000250"/>
    <property type="project" value="UniProtKB"/>
</dbReference>
<dbReference type="CDD" id="cd00170">
    <property type="entry name" value="SEC14"/>
    <property type="match status" value="1"/>
</dbReference>
<dbReference type="FunFam" id="3.40.525.10:FF:000001">
    <property type="entry name" value="BCL2/adenovirus E1B protein-interacting protein 2"/>
    <property type="match status" value="1"/>
</dbReference>
<dbReference type="Gene3D" id="3.40.525.10">
    <property type="entry name" value="CRAL-TRIO lipid binding domain"/>
    <property type="match status" value="1"/>
</dbReference>
<dbReference type="InterPro" id="IPR022181">
    <property type="entry name" value="Bcl2-/adenovirus-E1B"/>
</dbReference>
<dbReference type="InterPro" id="IPR001251">
    <property type="entry name" value="CRAL-TRIO_dom"/>
</dbReference>
<dbReference type="InterPro" id="IPR036865">
    <property type="entry name" value="CRAL-TRIO_dom_sf"/>
</dbReference>
<dbReference type="PANTHER" id="PTHR12112">
    <property type="entry name" value="BNIP - RELATED"/>
    <property type="match status" value="1"/>
</dbReference>
<dbReference type="PANTHER" id="PTHR12112:SF9">
    <property type="entry name" value="CAYTAXIN"/>
    <property type="match status" value="1"/>
</dbReference>
<dbReference type="Pfam" id="PF12496">
    <property type="entry name" value="BNIP2"/>
    <property type="match status" value="1"/>
</dbReference>
<dbReference type="Pfam" id="PF13716">
    <property type="entry name" value="CRAL_TRIO_2"/>
    <property type="match status" value="1"/>
</dbReference>
<dbReference type="SMART" id="SM00516">
    <property type="entry name" value="SEC14"/>
    <property type="match status" value="1"/>
</dbReference>
<dbReference type="SUPFAM" id="SSF52087">
    <property type="entry name" value="CRAL/TRIO domain"/>
    <property type="match status" value="1"/>
</dbReference>
<dbReference type="PROSITE" id="PS50191">
    <property type="entry name" value="CRAL_TRIO"/>
    <property type="match status" value="1"/>
</dbReference>
<proteinExistence type="evidence at protein level"/>
<sequence>MGTTEATLRMENVDVRDEWQDEDLPRPLPEDTGVERLGGAVEDSSSPPSTLNLSGAHRKRKTLVAPEINISLDQSEGSLLSDDFLDTPDDLDINVDDIETPDETDSLEFLGNGNELEWEDDTPVATAKNMPGDSADLFGDGSAEDGSAANGRLWRTVIIGEQEHRIDLHMIRPYMKVVTHGGYYGEGLNAIIVFAACFLPDSSSPDYHYIMENLFLYVISSLELLVAEDYMIVYLNGATPRRRMPGIGWLKKCYHMIDRRLRKNLKSLIIVHPSWFIRTVLAISRPFISVKFISKIQYVHSLEELERLIPMEHVQLPDCVLQYEEQRLRAKRESTRPPQPEFLLPRSEEKPETVEEEDRAAEATEDQETSMS</sequence>